<name>TRM5_SORBI</name>
<organism>
    <name type="scientific">Sorghum bicolor</name>
    <name type="common">Sorghum</name>
    <name type="synonym">Sorghum vulgare</name>
    <dbReference type="NCBI Taxonomy" id="4558"/>
    <lineage>
        <taxon>Eukaryota</taxon>
        <taxon>Viridiplantae</taxon>
        <taxon>Streptophyta</taxon>
        <taxon>Embryophyta</taxon>
        <taxon>Tracheophyta</taxon>
        <taxon>Spermatophyta</taxon>
        <taxon>Magnoliopsida</taxon>
        <taxon>Liliopsida</taxon>
        <taxon>Poales</taxon>
        <taxon>Poaceae</taxon>
        <taxon>PACMAD clade</taxon>
        <taxon>Panicoideae</taxon>
        <taxon>Andropogonodae</taxon>
        <taxon>Andropogoneae</taxon>
        <taxon>Sorghinae</taxon>
        <taxon>Sorghum</taxon>
    </lineage>
</organism>
<accession>C5XX79</accession>
<proteinExistence type="inferred from homology"/>
<keyword id="KW-0963">Cytoplasm</keyword>
<keyword id="KW-0489">Methyltransferase</keyword>
<keyword id="KW-0496">Mitochondrion</keyword>
<keyword id="KW-0539">Nucleus</keyword>
<keyword id="KW-1185">Reference proteome</keyword>
<keyword id="KW-0949">S-adenosyl-L-methionine</keyword>
<keyword id="KW-0808">Transferase</keyword>
<keyword id="KW-0819">tRNA processing</keyword>
<reference key="1">
    <citation type="journal article" date="2009" name="Nature">
        <title>The Sorghum bicolor genome and the diversification of grasses.</title>
        <authorList>
            <person name="Paterson A.H."/>
            <person name="Bowers J.E."/>
            <person name="Bruggmann R."/>
            <person name="Dubchak I."/>
            <person name="Grimwood J."/>
            <person name="Gundlach H."/>
            <person name="Haberer G."/>
            <person name="Hellsten U."/>
            <person name="Mitros T."/>
            <person name="Poliakov A."/>
            <person name="Schmutz J."/>
            <person name="Spannagl M."/>
            <person name="Tang H."/>
            <person name="Wang X."/>
            <person name="Wicker T."/>
            <person name="Bharti A.K."/>
            <person name="Chapman J."/>
            <person name="Feltus F.A."/>
            <person name="Gowik U."/>
            <person name="Grigoriev I.V."/>
            <person name="Lyons E."/>
            <person name="Maher C.A."/>
            <person name="Martis M."/>
            <person name="Narechania A."/>
            <person name="Otillar R.P."/>
            <person name="Penning B.W."/>
            <person name="Salamov A.A."/>
            <person name="Wang Y."/>
            <person name="Zhang L."/>
            <person name="Carpita N.C."/>
            <person name="Freeling M."/>
            <person name="Gingle A.R."/>
            <person name="Hash C.T."/>
            <person name="Keller B."/>
            <person name="Klein P."/>
            <person name="Kresovich S."/>
            <person name="McCann M.C."/>
            <person name="Ming R."/>
            <person name="Peterson D.G."/>
            <person name="Mehboob-ur-Rahman M."/>
            <person name="Ware D."/>
            <person name="Westhoff P."/>
            <person name="Mayer K.F.X."/>
            <person name="Messing J."/>
            <person name="Rokhsar D.S."/>
        </authorList>
    </citation>
    <scope>NUCLEOTIDE SEQUENCE [LARGE SCALE GENOMIC DNA]</scope>
    <source>
        <strain>cv. BTx623</strain>
    </source>
</reference>
<reference key="2">
    <citation type="journal article" date="2018" name="Plant J.">
        <title>The Sorghum bicolor reference genome: improved assembly, gene annotations, a transcriptome atlas, and signatures of genome organization.</title>
        <authorList>
            <person name="McCormick R.F."/>
            <person name="Truong S.K."/>
            <person name="Sreedasyam A."/>
            <person name="Jenkins J."/>
            <person name="Shu S."/>
            <person name="Sims D."/>
            <person name="Kennedy M."/>
            <person name="Amirebrahimi M."/>
            <person name="Weers B.D."/>
            <person name="McKinley B."/>
            <person name="Mattison A."/>
            <person name="Morishige D.T."/>
            <person name="Grimwood J."/>
            <person name="Schmutz J."/>
            <person name="Mullet J.E."/>
        </authorList>
    </citation>
    <scope>GENOME REANNOTATION</scope>
    <source>
        <strain>cv. BTx623</strain>
    </source>
</reference>
<feature type="chain" id="PRO_0000414139" description="tRNA (guanine(37)-N(1))-methyltransferase">
    <location>
        <begin position="1"/>
        <end position="465"/>
    </location>
</feature>
<feature type="region of interest" description="Disordered" evidence="2">
    <location>
        <begin position="283"/>
        <end position="362"/>
    </location>
</feature>
<feature type="compositionally biased region" description="Polar residues" evidence="2">
    <location>
        <begin position="291"/>
        <end position="320"/>
    </location>
</feature>
<feature type="compositionally biased region" description="Basic residues" evidence="2">
    <location>
        <begin position="343"/>
        <end position="352"/>
    </location>
</feature>
<feature type="binding site" evidence="1">
    <location>
        <position position="189"/>
    </location>
    <ligand>
        <name>S-adenosyl-L-methionine</name>
        <dbReference type="ChEBI" id="CHEBI:59789"/>
    </ligand>
</feature>
<feature type="binding site" evidence="1">
    <location>
        <begin position="227"/>
        <end position="228"/>
    </location>
    <ligand>
        <name>S-adenosyl-L-methionine</name>
        <dbReference type="ChEBI" id="CHEBI:59789"/>
    </ligand>
</feature>
<feature type="binding site" evidence="1">
    <location>
        <begin position="255"/>
        <end position="256"/>
    </location>
    <ligand>
        <name>S-adenosyl-L-methionine</name>
        <dbReference type="ChEBI" id="CHEBI:59789"/>
    </ligand>
</feature>
<feature type="binding site" evidence="1">
    <location>
        <position position="371"/>
    </location>
    <ligand>
        <name>S-adenosyl-L-methionine</name>
        <dbReference type="ChEBI" id="CHEBI:59789"/>
    </ligand>
</feature>
<protein>
    <recommendedName>
        <fullName evidence="1">tRNA (guanine(37)-N(1))-methyltransferase</fullName>
        <ecNumber evidence="1">2.1.1.228</ecNumber>
    </recommendedName>
    <alternativeName>
        <fullName evidence="1">M1G-methyltransferase</fullName>
    </alternativeName>
    <alternativeName>
        <fullName evidence="1">tRNA [GM37] methyltransferase</fullName>
    </alternativeName>
    <alternativeName>
        <fullName evidence="1">tRNA methyltransferase 5 homolog</fullName>
    </alternativeName>
</protein>
<sequence>MEKLDESKFEQRLQLWALRIPRELSSAVTRLLRSGYLLDKPRVKTVVEDPEGDKNRLVILSEKIQKPDLSDMPQQELDSLKQLCNVDVVPYTLTLGYSYWSAGHVAHLNISDDLLPYKNVIAKVIYDKNYPRIQTVANKVGTITNEFRVPKFEILAGKNDMVTEVKQYGATFKLDYGLVYWNSRLDHEHIRLVSLFKKGDVICDMFAGIGPFAIPAAQKGCVVYANDLNPDSVHYLRTNAKINKVDDYIFAYNMDARVFMQNLMTVPGLETGSDCQVAADESYPKEGVPANENSSSNGNHNDVREGSQNGANESSVASTTAKKRQQTSEECESDCQDGDASQTKRRNNKRVRGPGPPPSKPWEHFDHVLMNLPASALQFLDCFDGLVQKKYWTGSLPWIHCYCFIRSSESEESILSNKLNAKIAEPIFHRVRDVAPNKAMFCLSFKLPMECLREDDSENHIESVA</sequence>
<dbReference type="EC" id="2.1.1.228" evidence="1"/>
<dbReference type="EMBL" id="CM000763">
    <property type="protein sequence ID" value="EES05392.1"/>
    <property type="molecule type" value="Genomic_DNA"/>
</dbReference>
<dbReference type="RefSeq" id="XP_002452416.1">
    <property type="nucleotide sequence ID" value="XM_002452371.1"/>
</dbReference>
<dbReference type="SMR" id="C5XX79"/>
<dbReference type="STRING" id="4558.C5XX79"/>
<dbReference type="EnsemblPlants" id="KXG30633">
    <property type="protein sequence ID" value="KXG30633"/>
    <property type="gene ID" value="SORBI_3004G208301"/>
</dbReference>
<dbReference type="Gramene" id="KXG30633">
    <property type="protein sequence ID" value="KXG30633"/>
    <property type="gene ID" value="SORBI_3004G208301"/>
</dbReference>
<dbReference type="eggNOG" id="KOG2078">
    <property type="taxonomic scope" value="Eukaryota"/>
</dbReference>
<dbReference type="HOGENOM" id="CLU_022610_2_3_1"/>
<dbReference type="InParanoid" id="C5XX79"/>
<dbReference type="OMA" id="VGSHSQF"/>
<dbReference type="Proteomes" id="UP000000768">
    <property type="component" value="Chromosome 4"/>
</dbReference>
<dbReference type="ExpressionAtlas" id="C5XX79">
    <property type="expression patterns" value="baseline and differential"/>
</dbReference>
<dbReference type="GO" id="GO:0005737">
    <property type="term" value="C:cytoplasm"/>
    <property type="evidence" value="ECO:0000318"/>
    <property type="project" value="GO_Central"/>
</dbReference>
<dbReference type="GO" id="GO:0005759">
    <property type="term" value="C:mitochondrial matrix"/>
    <property type="evidence" value="ECO:0007669"/>
    <property type="project" value="UniProtKB-SubCell"/>
</dbReference>
<dbReference type="GO" id="GO:0005634">
    <property type="term" value="C:nucleus"/>
    <property type="evidence" value="ECO:0007669"/>
    <property type="project" value="UniProtKB-SubCell"/>
</dbReference>
<dbReference type="GO" id="GO:0052906">
    <property type="term" value="F:tRNA (guanine(37)-N1)-methyltransferase activity"/>
    <property type="evidence" value="ECO:0007669"/>
    <property type="project" value="UniProtKB-UniRule"/>
</dbReference>
<dbReference type="GO" id="GO:0008175">
    <property type="term" value="F:tRNA methyltransferase activity"/>
    <property type="evidence" value="ECO:0000318"/>
    <property type="project" value="GO_Central"/>
</dbReference>
<dbReference type="GO" id="GO:0002939">
    <property type="term" value="P:tRNA N1-guanine methylation"/>
    <property type="evidence" value="ECO:0000318"/>
    <property type="project" value="GO_Central"/>
</dbReference>
<dbReference type="CDD" id="cd02440">
    <property type="entry name" value="AdoMet_MTases"/>
    <property type="match status" value="1"/>
</dbReference>
<dbReference type="FunFam" id="3.30.300.110:FF:000004">
    <property type="entry name" value="tRNA (guanine(37)-N1)-methyltransferase"/>
    <property type="match status" value="1"/>
</dbReference>
<dbReference type="Gene3D" id="3.30.300.110">
    <property type="entry name" value="Met-10+ protein-like domains"/>
    <property type="match status" value="1"/>
</dbReference>
<dbReference type="Gene3D" id="3.40.50.150">
    <property type="entry name" value="Vaccinia Virus protein VP39"/>
    <property type="match status" value="1"/>
</dbReference>
<dbReference type="HAMAP" id="MF_03152">
    <property type="entry name" value="TRM5"/>
    <property type="match status" value="1"/>
</dbReference>
<dbReference type="InterPro" id="IPR030382">
    <property type="entry name" value="MeTrfase_TRM5/TYW2"/>
</dbReference>
<dbReference type="InterPro" id="IPR029063">
    <property type="entry name" value="SAM-dependent_MTases_sf"/>
</dbReference>
<dbReference type="InterPro" id="IPR056743">
    <property type="entry name" value="TRM5-TYW2-like_MTfase"/>
</dbReference>
<dbReference type="InterPro" id="IPR056744">
    <property type="entry name" value="TRM5/TYW2-like_N"/>
</dbReference>
<dbReference type="InterPro" id="IPR025792">
    <property type="entry name" value="tRNA_Gua_MeTrfase_euk"/>
</dbReference>
<dbReference type="PANTHER" id="PTHR23245:SF36">
    <property type="entry name" value="TRNA (GUANINE(37)-N1)-METHYLTRANSFERASE"/>
    <property type="match status" value="1"/>
</dbReference>
<dbReference type="PANTHER" id="PTHR23245">
    <property type="entry name" value="TRNA METHYLTRANSFERASE"/>
    <property type="match status" value="1"/>
</dbReference>
<dbReference type="Pfam" id="PF02475">
    <property type="entry name" value="TRM5-TYW2_MTfase"/>
    <property type="match status" value="1"/>
</dbReference>
<dbReference type="Pfam" id="PF25133">
    <property type="entry name" value="TYW2_N_2"/>
    <property type="match status" value="1"/>
</dbReference>
<dbReference type="SUPFAM" id="SSF53335">
    <property type="entry name" value="S-adenosyl-L-methionine-dependent methyltransferases"/>
    <property type="match status" value="1"/>
</dbReference>
<dbReference type="PROSITE" id="PS51684">
    <property type="entry name" value="SAM_MT_TRM5_TYW2"/>
    <property type="match status" value="1"/>
</dbReference>
<comment type="function">
    <text evidence="1">Specifically methylates the N1 position of guanosine-37 in various cytoplasmic and mitochondrial tRNAs. Methylation is not dependent on the nature of the nucleoside 5' of the target nucleoside. This is the first step in the biosynthesis of wybutosine (yW), a modified base adjacent to the anticodon of tRNAs and required for accurate decoding.</text>
</comment>
<comment type="catalytic activity">
    <reaction evidence="1">
        <text>guanosine(37) in tRNA + S-adenosyl-L-methionine = N(1)-methylguanosine(37) in tRNA + S-adenosyl-L-homocysteine + H(+)</text>
        <dbReference type="Rhea" id="RHEA:36899"/>
        <dbReference type="Rhea" id="RHEA-COMP:10145"/>
        <dbReference type="Rhea" id="RHEA-COMP:10147"/>
        <dbReference type="ChEBI" id="CHEBI:15378"/>
        <dbReference type="ChEBI" id="CHEBI:57856"/>
        <dbReference type="ChEBI" id="CHEBI:59789"/>
        <dbReference type="ChEBI" id="CHEBI:73542"/>
        <dbReference type="ChEBI" id="CHEBI:74269"/>
        <dbReference type="EC" id="2.1.1.228"/>
    </reaction>
</comment>
<comment type="subunit">
    <text evidence="1">Monomer.</text>
</comment>
<comment type="subcellular location">
    <subcellularLocation>
        <location evidence="1">Mitochondrion matrix</location>
    </subcellularLocation>
    <subcellularLocation>
        <location evidence="1">Nucleus</location>
    </subcellularLocation>
    <subcellularLocation>
        <location evidence="1">Cytoplasm</location>
    </subcellularLocation>
    <text evidence="1">Predominantly in the mitochondria and in the nucleus.</text>
</comment>
<comment type="similarity">
    <text evidence="3">Belongs to the class I-like SAM-binding methyltransferase superfamily. TRM5/TYW2 family.</text>
</comment>
<gene>
    <name type="ordered locus">Sb04g025390</name>
</gene>
<evidence type="ECO:0000255" key="1">
    <source>
        <dbReference type="HAMAP-Rule" id="MF_03152"/>
    </source>
</evidence>
<evidence type="ECO:0000256" key="2">
    <source>
        <dbReference type="SAM" id="MobiDB-lite"/>
    </source>
</evidence>
<evidence type="ECO:0000305" key="3"/>